<feature type="chain" id="PRO_1000069886" description="Pyridoxal kinase PdxY">
    <location>
        <begin position="1"/>
        <end position="288"/>
    </location>
</feature>
<feature type="binding site" evidence="1">
    <location>
        <position position="12"/>
    </location>
    <ligand>
        <name>substrate</name>
    </ligand>
</feature>
<feature type="binding site" evidence="1">
    <location>
        <begin position="47"/>
        <end position="48"/>
    </location>
    <ligand>
        <name>substrate</name>
    </ligand>
</feature>
<feature type="binding site" evidence="1">
    <location>
        <position position="114"/>
    </location>
    <ligand>
        <name>ATP</name>
        <dbReference type="ChEBI" id="CHEBI:30616"/>
    </ligand>
</feature>
<feature type="binding site" evidence="1">
    <location>
        <position position="151"/>
    </location>
    <ligand>
        <name>ATP</name>
        <dbReference type="ChEBI" id="CHEBI:30616"/>
    </ligand>
</feature>
<feature type="binding site" evidence="1">
    <location>
        <position position="184"/>
    </location>
    <ligand>
        <name>ATP</name>
        <dbReference type="ChEBI" id="CHEBI:30616"/>
    </ligand>
</feature>
<feature type="binding site" evidence="1">
    <location>
        <begin position="211"/>
        <end position="214"/>
    </location>
    <ligand>
        <name>ATP</name>
        <dbReference type="ChEBI" id="CHEBI:30616"/>
    </ligand>
</feature>
<feature type="binding site" evidence="1">
    <location>
        <position position="225"/>
    </location>
    <ligand>
        <name>substrate</name>
    </ligand>
</feature>
<comment type="function">
    <text evidence="1">Pyridoxal kinase involved in the salvage pathway of pyridoxal 5'-phosphate (PLP). Catalyzes the phosphorylation of pyridoxal to PLP.</text>
</comment>
<comment type="catalytic activity">
    <reaction evidence="1">
        <text>pyridoxal + ATP = pyridoxal 5'-phosphate + ADP + H(+)</text>
        <dbReference type="Rhea" id="RHEA:10224"/>
        <dbReference type="ChEBI" id="CHEBI:15378"/>
        <dbReference type="ChEBI" id="CHEBI:17310"/>
        <dbReference type="ChEBI" id="CHEBI:30616"/>
        <dbReference type="ChEBI" id="CHEBI:456216"/>
        <dbReference type="ChEBI" id="CHEBI:597326"/>
        <dbReference type="EC" id="2.7.1.35"/>
    </reaction>
</comment>
<comment type="cofactor">
    <cofactor evidence="1">
        <name>Mg(2+)</name>
        <dbReference type="ChEBI" id="CHEBI:18420"/>
    </cofactor>
</comment>
<comment type="pathway">
    <text evidence="1">Cofactor metabolism; pyridoxal 5'-phosphate salvage; pyridoxal 5'-phosphate from pyridoxal: step 1/1.</text>
</comment>
<comment type="subunit">
    <text evidence="1">Homodimer.</text>
</comment>
<comment type="similarity">
    <text evidence="1">Belongs to the pyridoxine kinase family. PdxY subfamily.</text>
</comment>
<evidence type="ECO:0000255" key="1">
    <source>
        <dbReference type="HAMAP-Rule" id="MF_01639"/>
    </source>
</evidence>
<gene>
    <name evidence="1" type="primary">pdxY</name>
    <name type="ordered locus">PSPA7_6318</name>
</gene>
<organism>
    <name type="scientific">Pseudomonas paraeruginosa (strain DSM 24068 / PA7)</name>
    <name type="common">Pseudomonas aeruginosa (strain PA7)</name>
    <dbReference type="NCBI Taxonomy" id="381754"/>
    <lineage>
        <taxon>Bacteria</taxon>
        <taxon>Pseudomonadati</taxon>
        <taxon>Pseudomonadota</taxon>
        <taxon>Gammaproteobacteria</taxon>
        <taxon>Pseudomonadales</taxon>
        <taxon>Pseudomonadaceae</taxon>
        <taxon>Pseudomonas</taxon>
        <taxon>Pseudomonas paraeruginosa</taxon>
    </lineage>
</organism>
<protein>
    <recommendedName>
        <fullName evidence="1">Pyridoxal kinase PdxY</fullName>
        <shortName evidence="1">PL kinase</shortName>
        <ecNumber evidence="1">2.7.1.35</ecNumber>
    </recommendedName>
</protein>
<reference key="1">
    <citation type="submission" date="2007-06" db="EMBL/GenBank/DDBJ databases">
        <authorList>
            <person name="Dodson R.J."/>
            <person name="Harkins D."/>
            <person name="Paulsen I.T."/>
        </authorList>
    </citation>
    <scope>NUCLEOTIDE SEQUENCE [LARGE SCALE GENOMIC DNA]</scope>
    <source>
        <strain>DSM 24068 / PA7</strain>
    </source>
</reference>
<sequence>MPRTPHLLAIQSHVVFGHAGNAAAVFPMQRIGINVWPLNTVQFSNHTQYGRWTGQVLPPEQIPALVEGIAGIGELGNCDAVLSGYLGSAAQGRAILEVVGRIKQANPRALYLCDPVMGHPEKGCIVAPEVSDFLLEEAAAVADYLCPNQLELDSFCDRQPNSLADCVEMARSLLARGPRAILVKHLNYPGKAGDTFEMLLVAADQVWHLQRPLLAFPRQPVGVGDLTSGLFLSRLLLGDDLRNAFEFTSAAVHEVLLETQARGSYELELVRAQDRIAHPRVRFDAVRL</sequence>
<keyword id="KW-0067">ATP-binding</keyword>
<keyword id="KW-0418">Kinase</keyword>
<keyword id="KW-0460">Magnesium</keyword>
<keyword id="KW-0547">Nucleotide-binding</keyword>
<keyword id="KW-0808">Transferase</keyword>
<name>PDXY_PSEP7</name>
<accession>A6VEZ4</accession>
<proteinExistence type="inferred from homology"/>
<dbReference type="EC" id="2.7.1.35" evidence="1"/>
<dbReference type="EMBL" id="CP000744">
    <property type="protein sequence ID" value="ABR80660.1"/>
    <property type="molecule type" value="Genomic_DNA"/>
</dbReference>
<dbReference type="RefSeq" id="WP_012078075.1">
    <property type="nucleotide sequence ID" value="NC_009656.1"/>
</dbReference>
<dbReference type="SMR" id="A6VEZ4"/>
<dbReference type="KEGG" id="pap:PSPA7_6318"/>
<dbReference type="HOGENOM" id="CLU_046496_3_0_6"/>
<dbReference type="UniPathway" id="UPA01068">
    <property type="reaction ID" value="UER00298"/>
</dbReference>
<dbReference type="Proteomes" id="UP000001582">
    <property type="component" value="Chromosome"/>
</dbReference>
<dbReference type="GO" id="GO:0005829">
    <property type="term" value="C:cytosol"/>
    <property type="evidence" value="ECO:0007669"/>
    <property type="project" value="TreeGrafter"/>
</dbReference>
<dbReference type="GO" id="GO:0005524">
    <property type="term" value="F:ATP binding"/>
    <property type="evidence" value="ECO:0007669"/>
    <property type="project" value="UniProtKB-UniRule"/>
</dbReference>
<dbReference type="GO" id="GO:0000287">
    <property type="term" value="F:magnesium ion binding"/>
    <property type="evidence" value="ECO:0007669"/>
    <property type="project" value="UniProtKB-UniRule"/>
</dbReference>
<dbReference type="GO" id="GO:0008478">
    <property type="term" value="F:pyridoxal kinase activity"/>
    <property type="evidence" value="ECO:0007669"/>
    <property type="project" value="UniProtKB-UniRule"/>
</dbReference>
<dbReference type="GO" id="GO:0009443">
    <property type="term" value="P:pyridoxal 5'-phosphate salvage"/>
    <property type="evidence" value="ECO:0007669"/>
    <property type="project" value="UniProtKB-UniRule"/>
</dbReference>
<dbReference type="CDD" id="cd01173">
    <property type="entry name" value="pyridoxal_pyridoxamine_kinase"/>
    <property type="match status" value="1"/>
</dbReference>
<dbReference type="FunFam" id="3.40.1190.20:FF:000008">
    <property type="entry name" value="Pyridoxal kinase PdxY"/>
    <property type="match status" value="1"/>
</dbReference>
<dbReference type="Gene3D" id="3.40.1190.20">
    <property type="match status" value="1"/>
</dbReference>
<dbReference type="HAMAP" id="MF_01639">
    <property type="entry name" value="PdxY"/>
    <property type="match status" value="1"/>
</dbReference>
<dbReference type="InterPro" id="IPR013749">
    <property type="entry name" value="PM/HMP-P_kinase-1"/>
</dbReference>
<dbReference type="InterPro" id="IPR004625">
    <property type="entry name" value="PyrdxlKinase"/>
</dbReference>
<dbReference type="InterPro" id="IPR023685">
    <property type="entry name" value="Pyridoxal_kinase_PdxY"/>
</dbReference>
<dbReference type="InterPro" id="IPR029056">
    <property type="entry name" value="Ribokinase-like"/>
</dbReference>
<dbReference type="NCBIfam" id="NF004398">
    <property type="entry name" value="PRK05756.1"/>
    <property type="match status" value="1"/>
</dbReference>
<dbReference type="NCBIfam" id="TIGR00687">
    <property type="entry name" value="pyridox_kin"/>
    <property type="match status" value="1"/>
</dbReference>
<dbReference type="PANTHER" id="PTHR10534">
    <property type="entry name" value="PYRIDOXAL KINASE"/>
    <property type="match status" value="1"/>
</dbReference>
<dbReference type="PANTHER" id="PTHR10534:SF2">
    <property type="entry name" value="PYRIDOXAL KINASE"/>
    <property type="match status" value="1"/>
</dbReference>
<dbReference type="Pfam" id="PF08543">
    <property type="entry name" value="Phos_pyr_kin"/>
    <property type="match status" value="1"/>
</dbReference>
<dbReference type="SUPFAM" id="SSF53613">
    <property type="entry name" value="Ribokinase-like"/>
    <property type="match status" value="1"/>
</dbReference>